<dbReference type="EC" id="2.1.1.192" evidence="1"/>
<dbReference type="EMBL" id="CP000608">
    <property type="protein sequence ID" value="ABO46804.1"/>
    <property type="molecule type" value="Genomic_DNA"/>
</dbReference>
<dbReference type="RefSeq" id="WP_003028042.1">
    <property type="nucleotide sequence ID" value="NC_009257.1"/>
</dbReference>
<dbReference type="SMR" id="A4IY03"/>
<dbReference type="KEGG" id="ftw:FTW_0968"/>
<dbReference type="HOGENOM" id="CLU_029101_0_0_6"/>
<dbReference type="GO" id="GO:0005737">
    <property type="term" value="C:cytoplasm"/>
    <property type="evidence" value="ECO:0007669"/>
    <property type="project" value="UniProtKB-SubCell"/>
</dbReference>
<dbReference type="GO" id="GO:0051539">
    <property type="term" value="F:4 iron, 4 sulfur cluster binding"/>
    <property type="evidence" value="ECO:0007669"/>
    <property type="project" value="UniProtKB-UniRule"/>
</dbReference>
<dbReference type="GO" id="GO:0046872">
    <property type="term" value="F:metal ion binding"/>
    <property type="evidence" value="ECO:0007669"/>
    <property type="project" value="UniProtKB-KW"/>
</dbReference>
<dbReference type="GO" id="GO:0070040">
    <property type="term" value="F:rRNA (adenine(2503)-C2-)-methyltransferase activity"/>
    <property type="evidence" value="ECO:0007669"/>
    <property type="project" value="UniProtKB-UniRule"/>
</dbReference>
<dbReference type="GO" id="GO:0019843">
    <property type="term" value="F:rRNA binding"/>
    <property type="evidence" value="ECO:0007669"/>
    <property type="project" value="UniProtKB-UniRule"/>
</dbReference>
<dbReference type="GO" id="GO:0002935">
    <property type="term" value="F:tRNA (adenine(37)-C2)-methyltransferase activity"/>
    <property type="evidence" value="ECO:0007669"/>
    <property type="project" value="UniProtKB-UniRule"/>
</dbReference>
<dbReference type="GO" id="GO:0000049">
    <property type="term" value="F:tRNA binding"/>
    <property type="evidence" value="ECO:0007669"/>
    <property type="project" value="UniProtKB-UniRule"/>
</dbReference>
<dbReference type="GO" id="GO:0070475">
    <property type="term" value="P:rRNA base methylation"/>
    <property type="evidence" value="ECO:0007669"/>
    <property type="project" value="UniProtKB-UniRule"/>
</dbReference>
<dbReference type="GO" id="GO:0030488">
    <property type="term" value="P:tRNA methylation"/>
    <property type="evidence" value="ECO:0007669"/>
    <property type="project" value="UniProtKB-UniRule"/>
</dbReference>
<dbReference type="CDD" id="cd01335">
    <property type="entry name" value="Radical_SAM"/>
    <property type="match status" value="1"/>
</dbReference>
<dbReference type="FunFam" id="1.10.150.530:FF:000003">
    <property type="entry name" value="Dual-specificity RNA methyltransferase RlmN"/>
    <property type="match status" value="1"/>
</dbReference>
<dbReference type="FunFam" id="3.20.20.70:FF:000008">
    <property type="entry name" value="Dual-specificity RNA methyltransferase RlmN"/>
    <property type="match status" value="1"/>
</dbReference>
<dbReference type="Gene3D" id="1.10.150.530">
    <property type="match status" value="1"/>
</dbReference>
<dbReference type="Gene3D" id="3.20.20.70">
    <property type="entry name" value="Aldolase class I"/>
    <property type="match status" value="1"/>
</dbReference>
<dbReference type="HAMAP" id="MF_01849">
    <property type="entry name" value="RNA_methyltr_RlmN"/>
    <property type="match status" value="1"/>
</dbReference>
<dbReference type="InterPro" id="IPR013785">
    <property type="entry name" value="Aldolase_TIM"/>
</dbReference>
<dbReference type="InterPro" id="IPR006638">
    <property type="entry name" value="Elp3/MiaA/NifB-like_rSAM"/>
</dbReference>
<dbReference type="InterPro" id="IPR040072">
    <property type="entry name" value="Methyltransferase_A"/>
</dbReference>
<dbReference type="InterPro" id="IPR048641">
    <property type="entry name" value="RlmN_N"/>
</dbReference>
<dbReference type="InterPro" id="IPR027492">
    <property type="entry name" value="RNA_MTrfase_RlmN"/>
</dbReference>
<dbReference type="InterPro" id="IPR004383">
    <property type="entry name" value="rRNA_lsu_MTrfase_RlmN/Cfr"/>
</dbReference>
<dbReference type="InterPro" id="IPR007197">
    <property type="entry name" value="rSAM"/>
</dbReference>
<dbReference type="NCBIfam" id="TIGR00048">
    <property type="entry name" value="rRNA_mod_RlmN"/>
    <property type="match status" value="1"/>
</dbReference>
<dbReference type="PANTHER" id="PTHR30544">
    <property type="entry name" value="23S RRNA METHYLTRANSFERASE"/>
    <property type="match status" value="1"/>
</dbReference>
<dbReference type="PANTHER" id="PTHR30544:SF5">
    <property type="entry name" value="RADICAL SAM CORE DOMAIN-CONTAINING PROTEIN"/>
    <property type="match status" value="1"/>
</dbReference>
<dbReference type="Pfam" id="PF04055">
    <property type="entry name" value="Radical_SAM"/>
    <property type="match status" value="1"/>
</dbReference>
<dbReference type="Pfam" id="PF21016">
    <property type="entry name" value="RlmN_N"/>
    <property type="match status" value="1"/>
</dbReference>
<dbReference type="PIRSF" id="PIRSF006004">
    <property type="entry name" value="CHP00048"/>
    <property type="match status" value="1"/>
</dbReference>
<dbReference type="SFLD" id="SFLDF00275">
    <property type="entry name" value="adenosine_C2_methyltransferase"/>
    <property type="match status" value="1"/>
</dbReference>
<dbReference type="SFLD" id="SFLDG01082">
    <property type="entry name" value="B12-binding_domain_containing"/>
    <property type="match status" value="1"/>
</dbReference>
<dbReference type="SFLD" id="SFLDG01062">
    <property type="entry name" value="methyltransferase_(Class_A)"/>
    <property type="match status" value="1"/>
</dbReference>
<dbReference type="SMART" id="SM00729">
    <property type="entry name" value="Elp3"/>
    <property type="match status" value="1"/>
</dbReference>
<dbReference type="SUPFAM" id="SSF102114">
    <property type="entry name" value="Radical SAM enzymes"/>
    <property type="match status" value="1"/>
</dbReference>
<dbReference type="PROSITE" id="PS51918">
    <property type="entry name" value="RADICAL_SAM"/>
    <property type="match status" value="1"/>
</dbReference>
<protein>
    <recommendedName>
        <fullName evidence="1">Dual-specificity RNA methyltransferase RlmN</fullName>
        <ecNumber evidence="1">2.1.1.192</ecNumber>
    </recommendedName>
    <alternativeName>
        <fullName evidence="1">23S rRNA (adenine(2503)-C(2))-methyltransferase</fullName>
    </alternativeName>
    <alternativeName>
        <fullName evidence="1">23S rRNA m2A2503 methyltransferase</fullName>
    </alternativeName>
    <alternativeName>
        <fullName evidence="1">Ribosomal RNA large subunit methyltransferase N</fullName>
    </alternativeName>
    <alternativeName>
        <fullName evidence="1">tRNA (adenine(37)-C(2))-methyltransferase</fullName>
    </alternativeName>
    <alternativeName>
        <fullName evidence="1">tRNA m2A37 methyltransferase</fullName>
    </alternativeName>
</protein>
<comment type="function">
    <text evidence="1">Specifically methylates position 2 of adenine 2503 in 23S rRNA and position 2 of adenine 37 in tRNAs. m2A2503 modification seems to play a crucial role in the proofreading step occurring at the peptidyl transferase center and thus would serve to optimize ribosomal fidelity.</text>
</comment>
<comment type="catalytic activity">
    <reaction evidence="1">
        <text>adenosine(2503) in 23S rRNA + 2 reduced [2Fe-2S]-[ferredoxin] + 2 S-adenosyl-L-methionine = 2-methyladenosine(2503) in 23S rRNA + 5'-deoxyadenosine + L-methionine + 2 oxidized [2Fe-2S]-[ferredoxin] + S-adenosyl-L-homocysteine</text>
        <dbReference type="Rhea" id="RHEA:42916"/>
        <dbReference type="Rhea" id="RHEA-COMP:10000"/>
        <dbReference type="Rhea" id="RHEA-COMP:10001"/>
        <dbReference type="Rhea" id="RHEA-COMP:10152"/>
        <dbReference type="Rhea" id="RHEA-COMP:10282"/>
        <dbReference type="ChEBI" id="CHEBI:17319"/>
        <dbReference type="ChEBI" id="CHEBI:33737"/>
        <dbReference type="ChEBI" id="CHEBI:33738"/>
        <dbReference type="ChEBI" id="CHEBI:57844"/>
        <dbReference type="ChEBI" id="CHEBI:57856"/>
        <dbReference type="ChEBI" id="CHEBI:59789"/>
        <dbReference type="ChEBI" id="CHEBI:74411"/>
        <dbReference type="ChEBI" id="CHEBI:74497"/>
        <dbReference type="EC" id="2.1.1.192"/>
    </reaction>
</comment>
<comment type="catalytic activity">
    <reaction evidence="1">
        <text>adenosine(37) in tRNA + 2 reduced [2Fe-2S]-[ferredoxin] + 2 S-adenosyl-L-methionine = 2-methyladenosine(37) in tRNA + 5'-deoxyadenosine + L-methionine + 2 oxidized [2Fe-2S]-[ferredoxin] + S-adenosyl-L-homocysteine</text>
        <dbReference type="Rhea" id="RHEA:43332"/>
        <dbReference type="Rhea" id="RHEA-COMP:10000"/>
        <dbReference type="Rhea" id="RHEA-COMP:10001"/>
        <dbReference type="Rhea" id="RHEA-COMP:10162"/>
        <dbReference type="Rhea" id="RHEA-COMP:10485"/>
        <dbReference type="ChEBI" id="CHEBI:17319"/>
        <dbReference type="ChEBI" id="CHEBI:33737"/>
        <dbReference type="ChEBI" id="CHEBI:33738"/>
        <dbReference type="ChEBI" id="CHEBI:57844"/>
        <dbReference type="ChEBI" id="CHEBI:57856"/>
        <dbReference type="ChEBI" id="CHEBI:59789"/>
        <dbReference type="ChEBI" id="CHEBI:74411"/>
        <dbReference type="ChEBI" id="CHEBI:74497"/>
        <dbReference type="EC" id="2.1.1.192"/>
    </reaction>
</comment>
<comment type="cofactor">
    <cofactor evidence="1">
        <name>[4Fe-4S] cluster</name>
        <dbReference type="ChEBI" id="CHEBI:49883"/>
    </cofactor>
    <text evidence="1">Binds 1 [4Fe-4S] cluster. The cluster is coordinated with 3 cysteines and an exchangeable S-adenosyl-L-methionine.</text>
</comment>
<comment type="subcellular location">
    <subcellularLocation>
        <location evidence="1">Cytoplasm</location>
    </subcellularLocation>
</comment>
<comment type="miscellaneous">
    <text evidence="1">Reaction proceeds by a ping-pong mechanism involving intermediate methylation of a conserved cysteine residue.</text>
</comment>
<comment type="similarity">
    <text evidence="1">Belongs to the radical SAM superfamily. RlmN family.</text>
</comment>
<sequence length="370" mass="41478">MQQDKVNLLGLNQKAIEDFFISIGEKKFHARQVFKWIHKKGVIDFDAMTDLGKNLRHKLKEKAQITIPKVVFSKASKDGTHKWLIDVGGSAVETVFILEEGRGTLCVSSQVGCTLNCSFCSTGKQGFNRNLSAAEVIAQLWIAARTLSKTDGEHDFTVTNIVMMGMGEPLMNFENVVPAMDIMMDDLAYGLSRRKVTLSTSGVVPRIYDLLEQSGVSLAVSLHAPNDMLRNEIVPINKKYNIDELLEACKLYAQKGPHKHITFEYTLMEEVNDNLSDAEELVALLKSREVPAKINLIPFNPYPGTPYKKPSNNRIHRFKEFLQHNGFVTTVRKTRGDDIDAACGQLAGDVMDKTNRKQRYLKKLGDTNAN</sequence>
<name>RLMN_FRATW</name>
<gene>
    <name evidence="1" type="primary">rlmN</name>
    <name type="ordered locus">FTW_0968</name>
</gene>
<proteinExistence type="inferred from homology"/>
<feature type="chain" id="PRO_0000350187" description="Dual-specificity RNA methyltransferase RlmN">
    <location>
        <begin position="1"/>
        <end position="370"/>
    </location>
</feature>
<feature type="domain" description="Radical SAM core" evidence="2">
    <location>
        <begin position="99"/>
        <end position="337"/>
    </location>
</feature>
<feature type="active site" description="Proton acceptor" evidence="1">
    <location>
        <position position="93"/>
    </location>
</feature>
<feature type="active site" description="S-methylcysteine intermediate" evidence="1">
    <location>
        <position position="343"/>
    </location>
</feature>
<feature type="binding site" evidence="1">
    <location>
        <position position="113"/>
    </location>
    <ligand>
        <name>[4Fe-4S] cluster</name>
        <dbReference type="ChEBI" id="CHEBI:49883"/>
        <note>4Fe-4S-S-AdoMet</note>
    </ligand>
</feature>
<feature type="binding site" evidence="1">
    <location>
        <position position="117"/>
    </location>
    <ligand>
        <name>[4Fe-4S] cluster</name>
        <dbReference type="ChEBI" id="CHEBI:49883"/>
        <note>4Fe-4S-S-AdoMet</note>
    </ligand>
</feature>
<feature type="binding site" evidence="1">
    <location>
        <position position="120"/>
    </location>
    <ligand>
        <name>[4Fe-4S] cluster</name>
        <dbReference type="ChEBI" id="CHEBI:49883"/>
        <note>4Fe-4S-S-AdoMet</note>
    </ligand>
</feature>
<feature type="binding site" evidence="1">
    <location>
        <begin position="167"/>
        <end position="168"/>
    </location>
    <ligand>
        <name>S-adenosyl-L-methionine</name>
        <dbReference type="ChEBI" id="CHEBI:59789"/>
    </ligand>
</feature>
<feature type="binding site" evidence="1">
    <location>
        <position position="199"/>
    </location>
    <ligand>
        <name>S-adenosyl-L-methionine</name>
        <dbReference type="ChEBI" id="CHEBI:59789"/>
    </ligand>
</feature>
<feature type="binding site" evidence="1">
    <location>
        <begin position="221"/>
        <end position="223"/>
    </location>
    <ligand>
        <name>S-adenosyl-L-methionine</name>
        <dbReference type="ChEBI" id="CHEBI:59789"/>
    </ligand>
</feature>
<feature type="binding site" evidence="1">
    <location>
        <position position="300"/>
    </location>
    <ligand>
        <name>S-adenosyl-L-methionine</name>
        <dbReference type="ChEBI" id="CHEBI:59789"/>
    </ligand>
</feature>
<feature type="disulfide bond" description="(transient)" evidence="1">
    <location>
        <begin position="106"/>
        <end position="343"/>
    </location>
</feature>
<keyword id="KW-0004">4Fe-4S</keyword>
<keyword id="KW-0963">Cytoplasm</keyword>
<keyword id="KW-1015">Disulfide bond</keyword>
<keyword id="KW-0408">Iron</keyword>
<keyword id="KW-0411">Iron-sulfur</keyword>
<keyword id="KW-0479">Metal-binding</keyword>
<keyword id="KW-0489">Methyltransferase</keyword>
<keyword id="KW-0698">rRNA processing</keyword>
<keyword id="KW-0949">S-adenosyl-L-methionine</keyword>
<keyword id="KW-0808">Transferase</keyword>
<keyword id="KW-0819">tRNA processing</keyword>
<accession>A4IY03</accession>
<reference key="1">
    <citation type="journal article" date="2007" name="PLoS ONE">
        <title>Complete genomic characterization of a pathogenic A.II strain of Francisella tularensis subspecies tularensis.</title>
        <authorList>
            <person name="Beckstrom-Sternberg S.M."/>
            <person name="Auerbach R.K."/>
            <person name="Godbole S."/>
            <person name="Pearson J.V."/>
            <person name="Beckstrom-Sternberg J.S."/>
            <person name="Deng Z."/>
            <person name="Munk C."/>
            <person name="Kubota K."/>
            <person name="Zhou Y."/>
            <person name="Bruce D."/>
            <person name="Noronha J."/>
            <person name="Scheuermann R.H."/>
            <person name="Wang A."/>
            <person name="Wei X."/>
            <person name="Wang J."/>
            <person name="Hao J."/>
            <person name="Wagner D.M."/>
            <person name="Brettin T.S."/>
            <person name="Brown N."/>
            <person name="Gilna P."/>
            <person name="Keim P.S."/>
        </authorList>
    </citation>
    <scope>NUCLEOTIDE SEQUENCE [LARGE SCALE GENOMIC DNA]</scope>
    <source>
        <strain>WY96-3418</strain>
    </source>
</reference>
<evidence type="ECO:0000255" key="1">
    <source>
        <dbReference type="HAMAP-Rule" id="MF_01849"/>
    </source>
</evidence>
<evidence type="ECO:0000255" key="2">
    <source>
        <dbReference type="PROSITE-ProRule" id="PRU01266"/>
    </source>
</evidence>
<organism>
    <name type="scientific">Francisella tularensis subsp. tularensis (strain WY96-3418)</name>
    <dbReference type="NCBI Taxonomy" id="418136"/>
    <lineage>
        <taxon>Bacteria</taxon>
        <taxon>Pseudomonadati</taxon>
        <taxon>Pseudomonadota</taxon>
        <taxon>Gammaproteobacteria</taxon>
        <taxon>Thiotrichales</taxon>
        <taxon>Francisellaceae</taxon>
        <taxon>Francisella</taxon>
    </lineage>
</organism>